<feature type="chain" id="PRO_1000164246" description="Chaperone protein DnaJ">
    <location>
        <begin position="1"/>
        <end position="377"/>
    </location>
</feature>
<feature type="domain" description="J" evidence="1">
    <location>
        <begin position="5"/>
        <end position="70"/>
    </location>
</feature>
<feature type="repeat" description="CXXCXGXG motif">
    <location>
        <begin position="145"/>
        <end position="152"/>
    </location>
</feature>
<feature type="repeat" description="CXXCXGXG motif">
    <location>
        <begin position="162"/>
        <end position="169"/>
    </location>
</feature>
<feature type="repeat" description="CXXCXGXG motif">
    <location>
        <begin position="184"/>
        <end position="191"/>
    </location>
</feature>
<feature type="repeat" description="CXXCXGXG motif">
    <location>
        <begin position="198"/>
        <end position="205"/>
    </location>
</feature>
<feature type="zinc finger region" description="CR-type" evidence="1">
    <location>
        <begin position="132"/>
        <end position="210"/>
    </location>
</feature>
<feature type="binding site" evidence="1">
    <location>
        <position position="145"/>
    </location>
    <ligand>
        <name>Zn(2+)</name>
        <dbReference type="ChEBI" id="CHEBI:29105"/>
        <label>1</label>
    </ligand>
</feature>
<feature type="binding site" evidence="1">
    <location>
        <position position="148"/>
    </location>
    <ligand>
        <name>Zn(2+)</name>
        <dbReference type="ChEBI" id="CHEBI:29105"/>
        <label>1</label>
    </ligand>
</feature>
<feature type="binding site" evidence="1">
    <location>
        <position position="162"/>
    </location>
    <ligand>
        <name>Zn(2+)</name>
        <dbReference type="ChEBI" id="CHEBI:29105"/>
        <label>2</label>
    </ligand>
</feature>
<feature type="binding site" evidence="1">
    <location>
        <position position="165"/>
    </location>
    <ligand>
        <name>Zn(2+)</name>
        <dbReference type="ChEBI" id="CHEBI:29105"/>
        <label>2</label>
    </ligand>
</feature>
<feature type="binding site" evidence="1">
    <location>
        <position position="184"/>
    </location>
    <ligand>
        <name>Zn(2+)</name>
        <dbReference type="ChEBI" id="CHEBI:29105"/>
        <label>2</label>
    </ligand>
</feature>
<feature type="binding site" evidence="1">
    <location>
        <position position="187"/>
    </location>
    <ligand>
        <name>Zn(2+)</name>
        <dbReference type="ChEBI" id="CHEBI:29105"/>
        <label>2</label>
    </ligand>
</feature>
<feature type="binding site" evidence="1">
    <location>
        <position position="198"/>
    </location>
    <ligand>
        <name>Zn(2+)</name>
        <dbReference type="ChEBI" id="CHEBI:29105"/>
        <label>1</label>
    </ligand>
</feature>
<feature type="binding site" evidence="1">
    <location>
        <position position="201"/>
    </location>
    <ligand>
        <name>Zn(2+)</name>
        <dbReference type="ChEBI" id="CHEBI:29105"/>
        <label>1</label>
    </ligand>
</feature>
<comment type="function">
    <text evidence="1">Participates actively in the response to hyperosmotic and heat shock by preventing the aggregation of stress-denatured proteins and by disaggregating proteins, also in an autonomous, DnaK-independent fashion. Unfolded proteins bind initially to DnaJ; upon interaction with the DnaJ-bound protein, DnaK hydrolyzes its bound ATP, resulting in the formation of a stable complex. GrpE releases ADP from DnaK; ATP binding to DnaK triggers the release of the substrate protein, thus completing the reaction cycle. Several rounds of ATP-dependent interactions between DnaJ, DnaK and GrpE are required for fully efficient folding. Also involved, together with DnaK and GrpE, in the DNA replication of plasmids through activation of initiation proteins.</text>
</comment>
<comment type="cofactor">
    <cofactor evidence="1">
        <name>Zn(2+)</name>
        <dbReference type="ChEBI" id="CHEBI:29105"/>
    </cofactor>
    <text evidence="1">Binds 2 Zn(2+) ions per monomer.</text>
</comment>
<comment type="subunit">
    <text evidence="1">Homodimer.</text>
</comment>
<comment type="subcellular location">
    <subcellularLocation>
        <location evidence="1">Cytoplasm</location>
    </subcellularLocation>
</comment>
<comment type="domain">
    <text evidence="1">The J domain is necessary and sufficient to stimulate DnaK ATPase activity. Zinc center 1 plays an important role in the autonomous, DnaK-independent chaperone activity of DnaJ. Zinc center 2 is essential for interaction with DnaK and for DnaJ activity.</text>
</comment>
<comment type="similarity">
    <text evidence="1">Belongs to the DnaJ family.</text>
</comment>
<dbReference type="EMBL" id="CP001158">
    <property type="protein sequence ID" value="ACL29972.1"/>
    <property type="molecule type" value="Genomic_DNA"/>
</dbReference>
<dbReference type="RefSeq" id="WP_012619453.1">
    <property type="nucleotide sequence ID" value="NC_011834.1"/>
</dbReference>
<dbReference type="SMR" id="B8D757"/>
<dbReference type="KEGG" id="bau:BUAPTUC7_151"/>
<dbReference type="HOGENOM" id="CLU_017633_0_7_6"/>
<dbReference type="GO" id="GO:0005737">
    <property type="term" value="C:cytoplasm"/>
    <property type="evidence" value="ECO:0007669"/>
    <property type="project" value="UniProtKB-SubCell"/>
</dbReference>
<dbReference type="GO" id="GO:0005524">
    <property type="term" value="F:ATP binding"/>
    <property type="evidence" value="ECO:0007669"/>
    <property type="project" value="InterPro"/>
</dbReference>
<dbReference type="GO" id="GO:0031072">
    <property type="term" value="F:heat shock protein binding"/>
    <property type="evidence" value="ECO:0007669"/>
    <property type="project" value="InterPro"/>
</dbReference>
<dbReference type="GO" id="GO:0051082">
    <property type="term" value="F:unfolded protein binding"/>
    <property type="evidence" value="ECO:0007669"/>
    <property type="project" value="UniProtKB-UniRule"/>
</dbReference>
<dbReference type="GO" id="GO:0008270">
    <property type="term" value="F:zinc ion binding"/>
    <property type="evidence" value="ECO:0007669"/>
    <property type="project" value="UniProtKB-UniRule"/>
</dbReference>
<dbReference type="GO" id="GO:0051085">
    <property type="term" value="P:chaperone cofactor-dependent protein refolding"/>
    <property type="evidence" value="ECO:0007669"/>
    <property type="project" value="TreeGrafter"/>
</dbReference>
<dbReference type="GO" id="GO:0006260">
    <property type="term" value="P:DNA replication"/>
    <property type="evidence" value="ECO:0007669"/>
    <property type="project" value="UniProtKB-KW"/>
</dbReference>
<dbReference type="GO" id="GO:0042026">
    <property type="term" value="P:protein refolding"/>
    <property type="evidence" value="ECO:0007669"/>
    <property type="project" value="TreeGrafter"/>
</dbReference>
<dbReference type="GO" id="GO:0009408">
    <property type="term" value="P:response to heat"/>
    <property type="evidence" value="ECO:0007669"/>
    <property type="project" value="InterPro"/>
</dbReference>
<dbReference type="CDD" id="cd06257">
    <property type="entry name" value="DnaJ"/>
    <property type="match status" value="1"/>
</dbReference>
<dbReference type="CDD" id="cd10747">
    <property type="entry name" value="DnaJ_C"/>
    <property type="match status" value="1"/>
</dbReference>
<dbReference type="CDD" id="cd10719">
    <property type="entry name" value="DnaJ_zf"/>
    <property type="match status" value="1"/>
</dbReference>
<dbReference type="FunFam" id="1.10.287.110:FF:000034">
    <property type="entry name" value="Chaperone protein DnaJ"/>
    <property type="match status" value="1"/>
</dbReference>
<dbReference type="FunFam" id="2.10.230.10:FF:000002">
    <property type="entry name" value="Molecular chaperone DnaJ"/>
    <property type="match status" value="1"/>
</dbReference>
<dbReference type="FunFam" id="2.60.260.20:FF:000004">
    <property type="entry name" value="Molecular chaperone DnaJ"/>
    <property type="match status" value="1"/>
</dbReference>
<dbReference type="Gene3D" id="1.10.287.110">
    <property type="entry name" value="DnaJ domain"/>
    <property type="match status" value="1"/>
</dbReference>
<dbReference type="Gene3D" id="2.10.230.10">
    <property type="entry name" value="Heat shock protein DnaJ, cysteine-rich domain"/>
    <property type="match status" value="1"/>
</dbReference>
<dbReference type="Gene3D" id="2.60.260.20">
    <property type="entry name" value="Urease metallochaperone UreE, N-terminal domain"/>
    <property type="match status" value="2"/>
</dbReference>
<dbReference type="HAMAP" id="MF_01152">
    <property type="entry name" value="DnaJ"/>
    <property type="match status" value="1"/>
</dbReference>
<dbReference type="InterPro" id="IPR012724">
    <property type="entry name" value="DnaJ"/>
</dbReference>
<dbReference type="InterPro" id="IPR002939">
    <property type="entry name" value="DnaJ_C"/>
</dbReference>
<dbReference type="InterPro" id="IPR001623">
    <property type="entry name" value="DnaJ_domain"/>
</dbReference>
<dbReference type="InterPro" id="IPR018253">
    <property type="entry name" value="DnaJ_domain_CS"/>
</dbReference>
<dbReference type="InterPro" id="IPR008971">
    <property type="entry name" value="HSP40/DnaJ_pept-bd"/>
</dbReference>
<dbReference type="InterPro" id="IPR001305">
    <property type="entry name" value="HSP_DnaJ_Cys-rich_dom"/>
</dbReference>
<dbReference type="InterPro" id="IPR036410">
    <property type="entry name" value="HSP_DnaJ_Cys-rich_dom_sf"/>
</dbReference>
<dbReference type="InterPro" id="IPR036869">
    <property type="entry name" value="J_dom_sf"/>
</dbReference>
<dbReference type="NCBIfam" id="TIGR02349">
    <property type="entry name" value="DnaJ_bact"/>
    <property type="match status" value="1"/>
</dbReference>
<dbReference type="NCBIfam" id="NF008035">
    <property type="entry name" value="PRK10767.1"/>
    <property type="match status" value="1"/>
</dbReference>
<dbReference type="PANTHER" id="PTHR43096:SF48">
    <property type="entry name" value="CHAPERONE PROTEIN DNAJ"/>
    <property type="match status" value="1"/>
</dbReference>
<dbReference type="PANTHER" id="PTHR43096">
    <property type="entry name" value="DNAJ HOMOLOG 1, MITOCHONDRIAL-RELATED"/>
    <property type="match status" value="1"/>
</dbReference>
<dbReference type="Pfam" id="PF00226">
    <property type="entry name" value="DnaJ"/>
    <property type="match status" value="1"/>
</dbReference>
<dbReference type="Pfam" id="PF01556">
    <property type="entry name" value="DnaJ_C"/>
    <property type="match status" value="1"/>
</dbReference>
<dbReference type="Pfam" id="PF00684">
    <property type="entry name" value="DnaJ_CXXCXGXG"/>
    <property type="match status" value="1"/>
</dbReference>
<dbReference type="PRINTS" id="PR00625">
    <property type="entry name" value="JDOMAIN"/>
</dbReference>
<dbReference type="SMART" id="SM00271">
    <property type="entry name" value="DnaJ"/>
    <property type="match status" value="1"/>
</dbReference>
<dbReference type="SUPFAM" id="SSF46565">
    <property type="entry name" value="Chaperone J-domain"/>
    <property type="match status" value="1"/>
</dbReference>
<dbReference type="SUPFAM" id="SSF57938">
    <property type="entry name" value="DnaJ/Hsp40 cysteine-rich domain"/>
    <property type="match status" value="1"/>
</dbReference>
<dbReference type="SUPFAM" id="SSF49493">
    <property type="entry name" value="HSP40/DnaJ peptide-binding domain"/>
    <property type="match status" value="2"/>
</dbReference>
<dbReference type="PROSITE" id="PS00636">
    <property type="entry name" value="DNAJ_1"/>
    <property type="match status" value="1"/>
</dbReference>
<dbReference type="PROSITE" id="PS50076">
    <property type="entry name" value="DNAJ_2"/>
    <property type="match status" value="1"/>
</dbReference>
<dbReference type="PROSITE" id="PS51188">
    <property type="entry name" value="ZF_CR"/>
    <property type="match status" value="1"/>
</dbReference>
<sequence>MAKKDYYQILGIPKSAEEREIKKAYKKLAMKYHPDRNQGDKTAEGKFKEIKEAYEILINEEKRSAYDQYGHAAFENGQSNSTYSTFTNSADFSDIFGDVFGDIFGGNRTQRAKKGADLCYNMEITLEEAVKGIKKEIQIPTLQKCKTCYGSGTRTGTKPRSCSTCHGKGQIHIRKGFFTVQQSCPTCHGKGTIIADPCNLCHGQGRVETYKILSVKIPPGLDTNDRIRLNNEGEAGANGAQSGDLYVQITVKKHPIFEREGNNLYCEVPINFTMAALGGEIEVPTLDGRVKLKIPYETQSGKLFRIRGRGVKSVQNRNQGDLLCRVVVETPVNLNEQQKNLLHELGNSFHGFRGEKNSPRSKRFFDGVKRFFDDLTR</sequence>
<keyword id="KW-0143">Chaperone</keyword>
<keyword id="KW-0963">Cytoplasm</keyword>
<keyword id="KW-0235">DNA replication</keyword>
<keyword id="KW-0479">Metal-binding</keyword>
<keyword id="KW-0677">Repeat</keyword>
<keyword id="KW-0346">Stress response</keyword>
<keyword id="KW-0862">Zinc</keyword>
<keyword id="KW-0863">Zinc-finger</keyword>
<reference key="1">
    <citation type="journal article" date="2009" name="Science">
        <title>The dynamics and time scale of ongoing genomic erosion in symbiotic bacteria.</title>
        <authorList>
            <person name="Moran N.A."/>
            <person name="McLaughlin H.J."/>
            <person name="Sorek R."/>
        </authorList>
    </citation>
    <scope>NUCLEOTIDE SEQUENCE [LARGE SCALE GENOMIC DNA]</scope>
    <source>
        <strain>Tuc7</strain>
    </source>
</reference>
<name>DNAJ_BUCAT</name>
<protein>
    <recommendedName>
        <fullName evidence="1">Chaperone protein DnaJ</fullName>
    </recommendedName>
</protein>
<accession>B8D757</accession>
<evidence type="ECO:0000255" key="1">
    <source>
        <dbReference type="HAMAP-Rule" id="MF_01152"/>
    </source>
</evidence>
<gene>
    <name evidence="1" type="primary">dnaJ</name>
    <name type="ordered locus">BUAPTUC7_151</name>
</gene>
<proteinExistence type="inferred from homology"/>
<organism>
    <name type="scientific">Buchnera aphidicola subsp. Acyrthosiphon pisum (strain Tuc7)</name>
    <dbReference type="NCBI Taxonomy" id="561501"/>
    <lineage>
        <taxon>Bacteria</taxon>
        <taxon>Pseudomonadati</taxon>
        <taxon>Pseudomonadota</taxon>
        <taxon>Gammaproteobacteria</taxon>
        <taxon>Enterobacterales</taxon>
        <taxon>Erwiniaceae</taxon>
        <taxon>Buchnera</taxon>
    </lineage>
</organism>